<name>RNH_ALKEH</name>
<gene>
    <name evidence="1" type="primary">rnhA</name>
    <name type="ordered locus">Mlg_1992</name>
</gene>
<dbReference type="EC" id="3.1.26.4" evidence="1"/>
<dbReference type="EMBL" id="CP000453">
    <property type="protein sequence ID" value="ABI57334.1"/>
    <property type="molecule type" value="Genomic_DNA"/>
</dbReference>
<dbReference type="SMR" id="Q0A753"/>
<dbReference type="KEGG" id="aeh:Mlg_1992"/>
<dbReference type="eggNOG" id="COG0328">
    <property type="taxonomic scope" value="Bacteria"/>
</dbReference>
<dbReference type="HOGENOM" id="CLU_030894_6_0_6"/>
<dbReference type="Proteomes" id="UP000001962">
    <property type="component" value="Chromosome"/>
</dbReference>
<dbReference type="GO" id="GO:0005737">
    <property type="term" value="C:cytoplasm"/>
    <property type="evidence" value="ECO:0007669"/>
    <property type="project" value="UniProtKB-SubCell"/>
</dbReference>
<dbReference type="GO" id="GO:0000287">
    <property type="term" value="F:magnesium ion binding"/>
    <property type="evidence" value="ECO:0007669"/>
    <property type="project" value="UniProtKB-UniRule"/>
</dbReference>
<dbReference type="GO" id="GO:0003676">
    <property type="term" value="F:nucleic acid binding"/>
    <property type="evidence" value="ECO:0007669"/>
    <property type="project" value="InterPro"/>
</dbReference>
<dbReference type="GO" id="GO:0004523">
    <property type="term" value="F:RNA-DNA hybrid ribonuclease activity"/>
    <property type="evidence" value="ECO:0007669"/>
    <property type="project" value="UniProtKB-UniRule"/>
</dbReference>
<dbReference type="GO" id="GO:0043137">
    <property type="term" value="P:DNA replication, removal of RNA primer"/>
    <property type="evidence" value="ECO:0007669"/>
    <property type="project" value="TreeGrafter"/>
</dbReference>
<dbReference type="CDD" id="cd09278">
    <property type="entry name" value="RNase_HI_prokaryote_like"/>
    <property type="match status" value="1"/>
</dbReference>
<dbReference type="FunFam" id="3.30.420.10:FF:000089">
    <property type="entry name" value="Ribonuclease H"/>
    <property type="match status" value="1"/>
</dbReference>
<dbReference type="Gene3D" id="3.30.420.10">
    <property type="entry name" value="Ribonuclease H-like superfamily/Ribonuclease H"/>
    <property type="match status" value="1"/>
</dbReference>
<dbReference type="HAMAP" id="MF_00042">
    <property type="entry name" value="RNase_H"/>
    <property type="match status" value="1"/>
</dbReference>
<dbReference type="InterPro" id="IPR050092">
    <property type="entry name" value="RNase_H"/>
</dbReference>
<dbReference type="InterPro" id="IPR012337">
    <property type="entry name" value="RNaseH-like_sf"/>
</dbReference>
<dbReference type="InterPro" id="IPR002156">
    <property type="entry name" value="RNaseH_domain"/>
</dbReference>
<dbReference type="InterPro" id="IPR036397">
    <property type="entry name" value="RNaseH_sf"/>
</dbReference>
<dbReference type="InterPro" id="IPR022892">
    <property type="entry name" value="RNaseHI"/>
</dbReference>
<dbReference type="NCBIfam" id="NF001236">
    <property type="entry name" value="PRK00203.1"/>
    <property type="match status" value="1"/>
</dbReference>
<dbReference type="PANTHER" id="PTHR10642">
    <property type="entry name" value="RIBONUCLEASE H1"/>
    <property type="match status" value="1"/>
</dbReference>
<dbReference type="PANTHER" id="PTHR10642:SF26">
    <property type="entry name" value="RIBONUCLEASE H1"/>
    <property type="match status" value="1"/>
</dbReference>
<dbReference type="Pfam" id="PF00075">
    <property type="entry name" value="RNase_H"/>
    <property type="match status" value="1"/>
</dbReference>
<dbReference type="SUPFAM" id="SSF53098">
    <property type="entry name" value="Ribonuclease H-like"/>
    <property type="match status" value="1"/>
</dbReference>
<dbReference type="PROSITE" id="PS50879">
    <property type="entry name" value="RNASE_H_1"/>
    <property type="match status" value="1"/>
</dbReference>
<sequence length="146" mass="16610">MYAWTDGACRGNPGPGGWGVVLRYRGHERTLHGGEPHTTNNRMELTAAIQALEALDRPCVVHLTTDSQYVRKGITEWMAGWKRRGWRTAARKPVLNEDLWRRLDALNQRHEVHWHWVRGHSGHAENEQADALANRGIDEMQEAGAT</sequence>
<feature type="chain" id="PRO_0000332556" description="Ribonuclease H">
    <location>
        <begin position="1"/>
        <end position="146"/>
    </location>
</feature>
<feature type="domain" description="RNase H type-1" evidence="2">
    <location>
        <begin position="1"/>
        <end position="138"/>
    </location>
</feature>
<feature type="binding site" evidence="1">
    <location>
        <position position="6"/>
    </location>
    <ligand>
        <name>Mg(2+)</name>
        <dbReference type="ChEBI" id="CHEBI:18420"/>
        <label>1</label>
    </ligand>
</feature>
<feature type="binding site" evidence="1">
    <location>
        <position position="6"/>
    </location>
    <ligand>
        <name>Mg(2+)</name>
        <dbReference type="ChEBI" id="CHEBI:18420"/>
        <label>2</label>
    </ligand>
</feature>
<feature type="binding site" evidence="1">
    <location>
        <position position="44"/>
    </location>
    <ligand>
        <name>Mg(2+)</name>
        <dbReference type="ChEBI" id="CHEBI:18420"/>
        <label>1</label>
    </ligand>
</feature>
<feature type="binding site" evidence="1">
    <location>
        <position position="66"/>
    </location>
    <ligand>
        <name>Mg(2+)</name>
        <dbReference type="ChEBI" id="CHEBI:18420"/>
        <label>1</label>
    </ligand>
</feature>
<feature type="binding site" evidence="1">
    <location>
        <position position="130"/>
    </location>
    <ligand>
        <name>Mg(2+)</name>
        <dbReference type="ChEBI" id="CHEBI:18420"/>
        <label>2</label>
    </ligand>
</feature>
<protein>
    <recommendedName>
        <fullName evidence="1">Ribonuclease H</fullName>
        <shortName evidence="1">RNase H</shortName>
        <ecNumber evidence="1">3.1.26.4</ecNumber>
    </recommendedName>
</protein>
<proteinExistence type="inferred from homology"/>
<reference key="1">
    <citation type="submission" date="2006-08" db="EMBL/GenBank/DDBJ databases">
        <title>Complete sequence of Alkalilimnicola ehrilichei MLHE-1.</title>
        <authorList>
            <person name="Copeland A."/>
            <person name="Lucas S."/>
            <person name="Lapidus A."/>
            <person name="Barry K."/>
            <person name="Detter J.C."/>
            <person name="Glavina del Rio T."/>
            <person name="Hammon N."/>
            <person name="Israni S."/>
            <person name="Dalin E."/>
            <person name="Tice H."/>
            <person name="Pitluck S."/>
            <person name="Sims D."/>
            <person name="Brettin T."/>
            <person name="Bruce D."/>
            <person name="Han C."/>
            <person name="Tapia R."/>
            <person name="Gilna P."/>
            <person name="Schmutz J."/>
            <person name="Larimer F."/>
            <person name="Land M."/>
            <person name="Hauser L."/>
            <person name="Kyrpides N."/>
            <person name="Mikhailova N."/>
            <person name="Oremland R.S."/>
            <person name="Hoeft S.E."/>
            <person name="Switzer-Blum J."/>
            <person name="Kulp T."/>
            <person name="King G."/>
            <person name="Tabita R."/>
            <person name="Witte B."/>
            <person name="Santini J.M."/>
            <person name="Basu P."/>
            <person name="Hollibaugh J.T."/>
            <person name="Xie G."/>
            <person name="Stolz J.F."/>
            <person name="Richardson P."/>
        </authorList>
    </citation>
    <scope>NUCLEOTIDE SEQUENCE [LARGE SCALE GENOMIC DNA]</scope>
    <source>
        <strain>ATCC BAA-1101 / DSM 17681 / MLHE-1</strain>
    </source>
</reference>
<evidence type="ECO:0000255" key="1">
    <source>
        <dbReference type="HAMAP-Rule" id="MF_00042"/>
    </source>
</evidence>
<evidence type="ECO:0000255" key="2">
    <source>
        <dbReference type="PROSITE-ProRule" id="PRU00408"/>
    </source>
</evidence>
<comment type="function">
    <text evidence="1">Endonuclease that specifically degrades the RNA of RNA-DNA hybrids.</text>
</comment>
<comment type="catalytic activity">
    <reaction evidence="1">
        <text>Endonucleolytic cleavage to 5'-phosphomonoester.</text>
        <dbReference type="EC" id="3.1.26.4"/>
    </reaction>
</comment>
<comment type="cofactor">
    <cofactor evidence="1">
        <name>Mg(2+)</name>
        <dbReference type="ChEBI" id="CHEBI:18420"/>
    </cofactor>
    <text evidence="1">Binds 1 Mg(2+) ion per subunit. May bind a second metal ion at a regulatory site, or after substrate binding.</text>
</comment>
<comment type="subunit">
    <text evidence="1">Monomer.</text>
</comment>
<comment type="subcellular location">
    <subcellularLocation>
        <location evidence="1">Cytoplasm</location>
    </subcellularLocation>
</comment>
<comment type="similarity">
    <text evidence="1">Belongs to the RNase H family.</text>
</comment>
<organism>
    <name type="scientific">Alkalilimnicola ehrlichii (strain ATCC BAA-1101 / DSM 17681 / MLHE-1)</name>
    <dbReference type="NCBI Taxonomy" id="187272"/>
    <lineage>
        <taxon>Bacteria</taxon>
        <taxon>Pseudomonadati</taxon>
        <taxon>Pseudomonadota</taxon>
        <taxon>Gammaproteobacteria</taxon>
        <taxon>Chromatiales</taxon>
        <taxon>Ectothiorhodospiraceae</taxon>
        <taxon>Alkalilimnicola</taxon>
    </lineage>
</organism>
<accession>Q0A753</accession>
<keyword id="KW-0963">Cytoplasm</keyword>
<keyword id="KW-0255">Endonuclease</keyword>
<keyword id="KW-0378">Hydrolase</keyword>
<keyword id="KW-0460">Magnesium</keyword>
<keyword id="KW-0479">Metal-binding</keyword>
<keyword id="KW-0540">Nuclease</keyword>
<keyword id="KW-1185">Reference proteome</keyword>